<proteinExistence type="inferred from homology"/>
<comment type="function">
    <text evidence="1">This protein binds to 23S rRNA in the presence of protein L20.</text>
</comment>
<comment type="subunit">
    <text evidence="1">Part of the 50S ribosomal subunit. Contacts protein L20.</text>
</comment>
<comment type="similarity">
    <text evidence="1">Belongs to the bacterial ribosomal protein bL21 family.</text>
</comment>
<gene>
    <name evidence="1" type="primary">rplU</name>
    <name type="ordered locus">EcolC_0514</name>
</gene>
<feature type="chain" id="PRO_1000086979" description="Large ribosomal subunit protein bL21">
    <location>
        <begin position="1"/>
        <end position="103"/>
    </location>
</feature>
<evidence type="ECO:0000255" key="1">
    <source>
        <dbReference type="HAMAP-Rule" id="MF_01363"/>
    </source>
</evidence>
<evidence type="ECO:0000305" key="2"/>
<dbReference type="EMBL" id="CP000946">
    <property type="protein sequence ID" value="ACA76191.1"/>
    <property type="molecule type" value="Genomic_DNA"/>
</dbReference>
<dbReference type="RefSeq" id="WP_000271401.1">
    <property type="nucleotide sequence ID" value="NZ_MTFT01000027.1"/>
</dbReference>
<dbReference type="SMR" id="B1IQT7"/>
<dbReference type="GeneID" id="93778795"/>
<dbReference type="KEGG" id="ecl:EcolC_0514"/>
<dbReference type="HOGENOM" id="CLU_061463_3_3_6"/>
<dbReference type="GO" id="GO:0005737">
    <property type="term" value="C:cytoplasm"/>
    <property type="evidence" value="ECO:0007669"/>
    <property type="project" value="UniProtKB-ARBA"/>
</dbReference>
<dbReference type="GO" id="GO:1990904">
    <property type="term" value="C:ribonucleoprotein complex"/>
    <property type="evidence" value="ECO:0007669"/>
    <property type="project" value="UniProtKB-KW"/>
</dbReference>
<dbReference type="GO" id="GO:0005840">
    <property type="term" value="C:ribosome"/>
    <property type="evidence" value="ECO:0007669"/>
    <property type="project" value="UniProtKB-KW"/>
</dbReference>
<dbReference type="GO" id="GO:0019843">
    <property type="term" value="F:rRNA binding"/>
    <property type="evidence" value="ECO:0007669"/>
    <property type="project" value="UniProtKB-UniRule"/>
</dbReference>
<dbReference type="GO" id="GO:0003735">
    <property type="term" value="F:structural constituent of ribosome"/>
    <property type="evidence" value="ECO:0007669"/>
    <property type="project" value="InterPro"/>
</dbReference>
<dbReference type="GO" id="GO:0006412">
    <property type="term" value="P:translation"/>
    <property type="evidence" value="ECO:0007669"/>
    <property type="project" value="UniProtKB-UniRule"/>
</dbReference>
<dbReference type="HAMAP" id="MF_01363">
    <property type="entry name" value="Ribosomal_bL21"/>
    <property type="match status" value="1"/>
</dbReference>
<dbReference type="InterPro" id="IPR028909">
    <property type="entry name" value="bL21-like"/>
</dbReference>
<dbReference type="InterPro" id="IPR036164">
    <property type="entry name" value="bL21-like_sf"/>
</dbReference>
<dbReference type="InterPro" id="IPR001787">
    <property type="entry name" value="Ribosomal_bL21"/>
</dbReference>
<dbReference type="InterPro" id="IPR018258">
    <property type="entry name" value="Ribosomal_bL21_CS"/>
</dbReference>
<dbReference type="NCBIfam" id="TIGR00061">
    <property type="entry name" value="L21"/>
    <property type="match status" value="1"/>
</dbReference>
<dbReference type="PANTHER" id="PTHR21349">
    <property type="entry name" value="50S RIBOSOMAL PROTEIN L21"/>
    <property type="match status" value="1"/>
</dbReference>
<dbReference type="PANTHER" id="PTHR21349:SF0">
    <property type="entry name" value="LARGE RIBOSOMAL SUBUNIT PROTEIN BL21M"/>
    <property type="match status" value="1"/>
</dbReference>
<dbReference type="Pfam" id="PF00829">
    <property type="entry name" value="Ribosomal_L21p"/>
    <property type="match status" value="1"/>
</dbReference>
<dbReference type="SUPFAM" id="SSF141091">
    <property type="entry name" value="L21p-like"/>
    <property type="match status" value="1"/>
</dbReference>
<dbReference type="PROSITE" id="PS01169">
    <property type="entry name" value="RIBOSOMAL_L21"/>
    <property type="match status" value="1"/>
</dbReference>
<keyword id="KW-0687">Ribonucleoprotein</keyword>
<keyword id="KW-0689">Ribosomal protein</keyword>
<keyword id="KW-0694">RNA-binding</keyword>
<keyword id="KW-0699">rRNA-binding</keyword>
<name>RL21_ECOLC</name>
<organism>
    <name type="scientific">Escherichia coli (strain ATCC 8739 / DSM 1576 / NBRC 3972 / NCIMB 8545 / WDCM 00012 / Crooks)</name>
    <dbReference type="NCBI Taxonomy" id="481805"/>
    <lineage>
        <taxon>Bacteria</taxon>
        <taxon>Pseudomonadati</taxon>
        <taxon>Pseudomonadota</taxon>
        <taxon>Gammaproteobacteria</taxon>
        <taxon>Enterobacterales</taxon>
        <taxon>Enterobacteriaceae</taxon>
        <taxon>Escherichia</taxon>
    </lineage>
</organism>
<accession>B1IQT7</accession>
<protein>
    <recommendedName>
        <fullName evidence="1">Large ribosomal subunit protein bL21</fullName>
    </recommendedName>
    <alternativeName>
        <fullName evidence="2">50S ribosomal protein L21</fullName>
    </alternativeName>
</protein>
<reference key="1">
    <citation type="submission" date="2008-02" db="EMBL/GenBank/DDBJ databases">
        <title>Complete sequence of Escherichia coli C str. ATCC 8739.</title>
        <authorList>
            <person name="Copeland A."/>
            <person name="Lucas S."/>
            <person name="Lapidus A."/>
            <person name="Glavina del Rio T."/>
            <person name="Dalin E."/>
            <person name="Tice H."/>
            <person name="Bruce D."/>
            <person name="Goodwin L."/>
            <person name="Pitluck S."/>
            <person name="Kiss H."/>
            <person name="Brettin T."/>
            <person name="Detter J.C."/>
            <person name="Han C."/>
            <person name="Kuske C.R."/>
            <person name="Schmutz J."/>
            <person name="Larimer F."/>
            <person name="Land M."/>
            <person name="Hauser L."/>
            <person name="Kyrpides N."/>
            <person name="Mikhailova N."/>
            <person name="Ingram L."/>
            <person name="Richardson P."/>
        </authorList>
    </citation>
    <scope>NUCLEOTIDE SEQUENCE [LARGE SCALE GENOMIC DNA]</scope>
    <source>
        <strain>ATCC 8739 / DSM 1576 / NBRC 3972 / NCIMB 8545 / WDCM 00012 / Crooks</strain>
    </source>
</reference>
<sequence length="103" mass="11564">MYAVFQSGGKQHRVSEGQTVRLEKLDIATGETVEFAEVLMIANGEEVKIGVPFVDGGVIKAEVVAHGRGEKVKIVKFRRRKHYRKQQGHRQWFTDVKITGISA</sequence>